<gene>
    <name type="ORF">SPAC1B3.20</name>
</gene>
<evidence type="ECO:0000256" key="1">
    <source>
        <dbReference type="SAM" id="MobiDB-lite"/>
    </source>
</evidence>
<dbReference type="EMBL" id="CU329670">
    <property type="protein sequence ID" value="CAB40188.1"/>
    <property type="molecule type" value="Genomic_DNA"/>
</dbReference>
<dbReference type="PIR" id="T38029">
    <property type="entry name" value="T38029"/>
</dbReference>
<dbReference type="RefSeq" id="NP_594795.1">
    <property type="nucleotide sequence ID" value="NM_001020223.2"/>
</dbReference>
<dbReference type="iPTMnet" id="Q9Y7I1"/>
<dbReference type="PaxDb" id="4896-SPAC1B3.20.1"/>
<dbReference type="EnsemblFungi" id="SPAC1B3.20.1">
    <property type="protein sequence ID" value="SPAC1B3.20.1:pep"/>
    <property type="gene ID" value="SPAC1B3.20"/>
</dbReference>
<dbReference type="KEGG" id="spo:2542570"/>
<dbReference type="PomBase" id="SPAC1B3.20"/>
<dbReference type="VEuPathDB" id="FungiDB:SPAC1B3.20"/>
<dbReference type="HOGENOM" id="CLU_2623393_0_0_1"/>
<dbReference type="InParanoid" id="Q9Y7I1"/>
<dbReference type="PRO" id="PR:Q9Y7I1"/>
<dbReference type="Proteomes" id="UP000002485">
    <property type="component" value="Chromosome I"/>
</dbReference>
<dbReference type="GO" id="GO:0005829">
    <property type="term" value="C:cytosol"/>
    <property type="evidence" value="ECO:0007005"/>
    <property type="project" value="PomBase"/>
</dbReference>
<dbReference type="GO" id="GO:0005634">
    <property type="term" value="C:nucleus"/>
    <property type="evidence" value="ECO:0007005"/>
    <property type="project" value="PomBase"/>
</dbReference>
<keyword id="KW-1185">Reference proteome</keyword>
<accession>Q9Y7I1</accession>
<organism>
    <name type="scientific">Schizosaccharomyces pombe (strain 972 / ATCC 24843)</name>
    <name type="common">Fission yeast</name>
    <dbReference type="NCBI Taxonomy" id="284812"/>
    <lineage>
        <taxon>Eukaryota</taxon>
        <taxon>Fungi</taxon>
        <taxon>Dikarya</taxon>
        <taxon>Ascomycota</taxon>
        <taxon>Taphrinomycotina</taxon>
        <taxon>Schizosaccharomycetes</taxon>
        <taxon>Schizosaccharomycetales</taxon>
        <taxon>Schizosaccharomycetaceae</taxon>
        <taxon>Schizosaccharomyces</taxon>
    </lineage>
</organism>
<name>YE1K_SCHPO</name>
<reference key="1">
    <citation type="journal article" date="2002" name="Nature">
        <title>The genome sequence of Schizosaccharomyces pombe.</title>
        <authorList>
            <person name="Wood V."/>
            <person name="Gwilliam R."/>
            <person name="Rajandream M.A."/>
            <person name="Lyne M.H."/>
            <person name="Lyne R."/>
            <person name="Stewart A."/>
            <person name="Sgouros J.G."/>
            <person name="Peat N."/>
            <person name="Hayles J."/>
            <person name="Baker S.G."/>
            <person name="Basham D."/>
            <person name="Bowman S."/>
            <person name="Brooks K."/>
            <person name="Brown D."/>
            <person name="Brown S."/>
            <person name="Chillingworth T."/>
            <person name="Churcher C.M."/>
            <person name="Collins M."/>
            <person name="Connor R."/>
            <person name="Cronin A."/>
            <person name="Davis P."/>
            <person name="Feltwell T."/>
            <person name="Fraser A."/>
            <person name="Gentles S."/>
            <person name="Goble A."/>
            <person name="Hamlin N."/>
            <person name="Harris D.E."/>
            <person name="Hidalgo J."/>
            <person name="Hodgson G."/>
            <person name="Holroyd S."/>
            <person name="Hornsby T."/>
            <person name="Howarth S."/>
            <person name="Huckle E.J."/>
            <person name="Hunt S."/>
            <person name="Jagels K."/>
            <person name="James K.D."/>
            <person name="Jones L."/>
            <person name="Jones M."/>
            <person name="Leather S."/>
            <person name="McDonald S."/>
            <person name="McLean J."/>
            <person name="Mooney P."/>
            <person name="Moule S."/>
            <person name="Mungall K.L."/>
            <person name="Murphy L.D."/>
            <person name="Niblett D."/>
            <person name="Odell C."/>
            <person name="Oliver K."/>
            <person name="O'Neil S."/>
            <person name="Pearson D."/>
            <person name="Quail M.A."/>
            <person name="Rabbinowitsch E."/>
            <person name="Rutherford K.M."/>
            <person name="Rutter S."/>
            <person name="Saunders D."/>
            <person name="Seeger K."/>
            <person name="Sharp S."/>
            <person name="Skelton J."/>
            <person name="Simmonds M.N."/>
            <person name="Squares R."/>
            <person name="Squares S."/>
            <person name="Stevens K."/>
            <person name="Taylor K."/>
            <person name="Taylor R.G."/>
            <person name="Tivey A."/>
            <person name="Walsh S.V."/>
            <person name="Warren T."/>
            <person name="Whitehead S."/>
            <person name="Woodward J.R."/>
            <person name="Volckaert G."/>
            <person name="Aert R."/>
            <person name="Robben J."/>
            <person name="Grymonprez B."/>
            <person name="Weltjens I."/>
            <person name="Vanstreels E."/>
            <person name="Rieger M."/>
            <person name="Schaefer M."/>
            <person name="Mueller-Auer S."/>
            <person name="Gabel C."/>
            <person name="Fuchs M."/>
            <person name="Duesterhoeft A."/>
            <person name="Fritzc C."/>
            <person name="Holzer E."/>
            <person name="Moestl D."/>
            <person name="Hilbert H."/>
            <person name="Borzym K."/>
            <person name="Langer I."/>
            <person name="Beck A."/>
            <person name="Lehrach H."/>
            <person name="Reinhardt R."/>
            <person name="Pohl T.M."/>
            <person name="Eger P."/>
            <person name="Zimmermann W."/>
            <person name="Wedler H."/>
            <person name="Wambutt R."/>
            <person name="Purnelle B."/>
            <person name="Goffeau A."/>
            <person name="Cadieu E."/>
            <person name="Dreano S."/>
            <person name="Gloux S."/>
            <person name="Lelaure V."/>
            <person name="Mottier S."/>
            <person name="Galibert F."/>
            <person name="Aves S.J."/>
            <person name="Xiang Z."/>
            <person name="Hunt C."/>
            <person name="Moore K."/>
            <person name="Hurst S.M."/>
            <person name="Lucas M."/>
            <person name="Rochet M."/>
            <person name="Gaillardin C."/>
            <person name="Tallada V.A."/>
            <person name="Garzon A."/>
            <person name="Thode G."/>
            <person name="Daga R.R."/>
            <person name="Cruzado L."/>
            <person name="Jimenez J."/>
            <person name="Sanchez M."/>
            <person name="del Rey F."/>
            <person name="Benito J."/>
            <person name="Dominguez A."/>
            <person name="Revuelta J.L."/>
            <person name="Moreno S."/>
            <person name="Armstrong J."/>
            <person name="Forsburg S.L."/>
            <person name="Cerutti L."/>
            <person name="Lowe T."/>
            <person name="McCombie W.R."/>
            <person name="Paulsen I."/>
            <person name="Potashkin J."/>
            <person name="Shpakovski G.V."/>
            <person name="Ussery D."/>
            <person name="Barrell B.G."/>
            <person name="Nurse P."/>
        </authorList>
    </citation>
    <scope>NUCLEOTIDE SEQUENCE [LARGE SCALE GENOMIC DNA]</scope>
    <source>
        <strain>972 / ATCC 24843</strain>
    </source>
</reference>
<proteinExistence type="predicted"/>
<protein>
    <recommendedName>
        <fullName>Uncharacterized protein C1B3.20</fullName>
    </recommendedName>
</protein>
<feature type="chain" id="PRO_0000116693" description="Uncharacterized protein C1B3.20">
    <location>
        <begin position="1"/>
        <end position="78"/>
    </location>
</feature>
<feature type="region of interest" description="Disordered" evidence="1">
    <location>
        <begin position="1"/>
        <end position="78"/>
    </location>
</feature>
<feature type="compositionally biased region" description="Basic and acidic residues" evidence="1">
    <location>
        <begin position="10"/>
        <end position="33"/>
    </location>
</feature>
<feature type="compositionally biased region" description="Basic and acidic residues" evidence="1">
    <location>
        <begin position="63"/>
        <end position="78"/>
    </location>
</feature>
<sequence length="78" mass="8551">MSSNSNTDHSTGDNRSKSEKQTDLRNALRETESHGMPPLRGPAGFPVNPRPFSHGGNANLDRLNLKEPVDLEGPKDEQ</sequence>